<dbReference type="EMBL" id="AY988057">
    <property type="protein sequence ID" value="AAY44264.1"/>
    <property type="molecule type" value="Genomic_DNA"/>
</dbReference>
<dbReference type="SMR" id="Q1X6Y1"/>
<dbReference type="GlyCosmos" id="Q1X6Y1">
    <property type="glycosylation" value="1 site, No reported glycans"/>
</dbReference>
<dbReference type="GO" id="GO:0030424">
    <property type="term" value="C:axon"/>
    <property type="evidence" value="ECO:0007669"/>
    <property type="project" value="TreeGrafter"/>
</dbReference>
<dbReference type="GO" id="GO:0030425">
    <property type="term" value="C:dendrite"/>
    <property type="evidence" value="ECO:0007669"/>
    <property type="project" value="TreeGrafter"/>
</dbReference>
<dbReference type="GO" id="GO:0005615">
    <property type="term" value="C:extracellular space"/>
    <property type="evidence" value="ECO:0007669"/>
    <property type="project" value="TreeGrafter"/>
</dbReference>
<dbReference type="GO" id="GO:0008021">
    <property type="term" value="C:synaptic vesicle"/>
    <property type="evidence" value="ECO:0007669"/>
    <property type="project" value="TreeGrafter"/>
</dbReference>
<dbReference type="GO" id="GO:0008083">
    <property type="term" value="F:growth factor activity"/>
    <property type="evidence" value="ECO:0007669"/>
    <property type="project" value="UniProtKB-KW"/>
</dbReference>
<dbReference type="GO" id="GO:0005163">
    <property type="term" value="F:nerve growth factor receptor binding"/>
    <property type="evidence" value="ECO:0007669"/>
    <property type="project" value="TreeGrafter"/>
</dbReference>
<dbReference type="GO" id="GO:0007169">
    <property type="term" value="P:cell surface receptor protein tyrosine kinase signaling pathway"/>
    <property type="evidence" value="ECO:0007669"/>
    <property type="project" value="TreeGrafter"/>
</dbReference>
<dbReference type="GO" id="GO:0050804">
    <property type="term" value="P:modulation of chemical synaptic transmission"/>
    <property type="evidence" value="ECO:0007669"/>
    <property type="project" value="TreeGrafter"/>
</dbReference>
<dbReference type="GO" id="GO:0043524">
    <property type="term" value="P:negative regulation of neuron apoptotic process"/>
    <property type="evidence" value="ECO:0007669"/>
    <property type="project" value="TreeGrafter"/>
</dbReference>
<dbReference type="GO" id="GO:0021675">
    <property type="term" value="P:nerve development"/>
    <property type="evidence" value="ECO:0007669"/>
    <property type="project" value="TreeGrafter"/>
</dbReference>
<dbReference type="GO" id="GO:0038180">
    <property type="term" value="P:nerve growth factor signaling pathway"/>
    <property type="evidence" value="ECO:0007669"/>
    <property type="project" value="TreeGrafter"/>
</dbReference>
<dbReference type="GO" id="GO:0048812">
    <property type="term" value="P:neuron projection morphogenesis"/>
    <property type="evidence" value="ECO:0007669"/>
    <property type="project" value="TreeGrafter"/>
</dbReference>
<dbReference type="Gene3D" id="2.10.90.10">
    <property type="entry name" value="Cystine-knot cytokines"/>
    <property type="match status" value="1"/>
</dbReference>
<dbReference type="InterPro" id="IPR029034">
    <property type="entry name" value="Cystine-knot_cytokine"/>
</dbReference>
<dbReference type="InterPro" id="IPR020408">
    <property type="entry name" value="Nerve_growth_factor-like"/>
</dbReference>
<dbReference type="InterPro" id="IPR002072">
    <property type="entry name" value="Nerve_growth_factor-rel"/>
</dbReference>
<dbReference type="InterPro" id="IPR015578">
    <property type="entry name" value="Neurotrophin-3"/>
</dbReference>
<dbReference type="InterPro" id="IPR045815">
    <property type="entry name" value="NTF3_N"/>
</dbReference>
<dbReference type="PANTHER" id="PTHR11589">
    <property type="entry name" value="NERVE GROWTH FACTOR NGF -RELATED"/>
    <property type="match status" value="1"/>
</dbReference>
<dbReference type="PANTHER" id="PTHR11589:SF4">
    <property type="entry name" value="NEUROTROPHIN-3"/>
    <property type="match status" value="1"/>
</dbReference>
<dbReference type="Pfam" id="PF00243">
    <property type="entry name" value="NGF"/>
    <property type="match status" value="1"/>
</dbReference>
<dbReference type="Pfam" id="PF19338">
    <property type="entry name" value="NTF3_N"/>
    <property type="match status" value="1"/>
</dbReference>
<dbReference type="PIRSF" id="PIRSF001789">
    <property type="entry name" value="NGF"/>
    <property type="match status" value="1"/>
</dbReference>
<dbReference type="PRINTS" id="PR01914">
    <property type="entry name" value="NEUROTROPHN3"/>
</dbReference>
<dbReference type="SMART" id="SM00140">
    <property type="entry name" value="NGF"/>
    <property type="match status" value="1"/>
</dbReference>
<dbReference type="SUPFAM" id="SSF57501">
    <property type="entry name" value="Cystine-knot cytokines"/>
    <property type="match status" value="1"/>
</dbReference>
<dbReference type="PROSITE" id="PS50270">
    <property type="entry name" value="NGF_2"/>
    <property type="match status" value="1"/>
</dbReference>
<organism>
    <name type="scientific">Eryx conicus</name>
    <name type="common">Rough-scaled sand boa</name>
    <name type="synonym">Gongylophis conicus</name>
    <dbReference type="NCBI Taxonomy" id="51867"/>
    <lineage>
        <taxon>Eukaryota</taxon>
        <taxon>Metazoa</taxon>
        <taxon>Chordata</taxon>
        <taxon>Craniata</taxon>
        <taxon>Vertebrata</taxon>
        <taxon>Euteleostomi</taxon>
        <taxon>Lepidosauria</taxon>
        <taxon>Squamata</taxon>
        <taxon>Bifurcata</taxon>
        <taxon>Unidentata</taxon>
        <taxon>Episquamata</taxon>
        <taxon>Toxicofera</taxon>
        <taxon>Serpentes</taxon>
        <taxon>Henophidia</taxon>
        <taxon>Boidae</taxon>
        <taxon>Erycinae</taxon>
        <taxon>Eryx</taxon>
    </lineage>
</organism>
<sequence length="163" mass="18346">IQSTSMDQGILTEDSMNSFIRTLIQAGIWKNKVPKQTARTKDGTQTTVKKTEAEADAMVSKDTRLSFQPIVSVDAELLRQQRRFSSPRVLLSENTPLEPPPLYLTEEPTVLNRTSRRKREGKSHRGEYSVCDSESRWVTDKSSAVDIRGHQVTVLGEIRMGPS</sequence>
<name>NTF3_ERYCN</name>
<gene>
    <name type="primary">NTF3</name>
</gene>
<feature type="signal peptide" evidence="2">
    <location>
        <begin position="1" status="less than"/>
        <end position="3"/>
    </location>
</feature>
<feature type="propeptide" id="PRO_0000346731" evidence="1">
    <location>
        <begin position="4"/>
        <end position="119"/>
    </location>
</feature>
<feature type="chain" id="PRO_0000346732" description="Neurotrophin-3">
    <location>
        <begin position="120"/>
        <end position="163" status="greater than"/>
    </location>
</feature>
<feature type="glycosylation site" description="N-linked (GlcNAc...) asparagine" evidence="2">
    <location>
        <position position="112"/>
    </location>
</feature>
<feature type="non-terminal residue">
    <location>
        <position position="1"/>
    </location>
</feature>
<feature type="non-terminal residue">
    <location>
        <position position="163"/>
    </location>
</feature>
<proteinExistence type="inferred from homology"/>
<accession>Q1X6Y1</accession>
<comment type="function">
    <text evidence="1">Seems to promote the survival of visceral and proprioceptive sensory neurons.</text>
</comment>
<comment type="subcellular location">
    <subcellularLocation>
        <location evidence="1">Secreted</location>
    </subcellularLocation>
</comment>
<comment type="similarity">
    <text evidence="3">Belongs to the NGF-beta family.</text>
</comment>
<evidence type="ECO:0000250" key="1"/>
<evidence type="ECO:0000255" key="2"/>
<evidence type="ECO:0000305" key="3"/>
<keyword id="KW-0165">Cleavage on pair of basic residues</keyword>
<keyword id="KW-0325">Glycoprotein</keyword>
<keyword id="KW-0339">Growth factor</keyword>
<keyword id="KW-0964">Secreted</keyword>
<keyword id="KW-0732">Signal</keyword>
<reference key="1">
    <citation type="journal article" date="2006" name="Mol. Phylogenet. Evol.">
        <title>Dispersal and vicariance: the complex evolutionary history of boid snakes.</title>
        <authorList>
            <person name="Noonan B.P."/>
            <person name="Chippindale P.T."/>
        </authorList>
    </citation>
    <scope>NUCLEOTIDE SEQUENCE [GENOMIC DNA]</scope>
</reference>
<protein>
    <recommendedName>
        <fullName>Neurotrophin-3</fullName>
        <shortName>NT-3</shortName>
    </recommendedName>
</protein>